<name>ATPI_BIGNA</name>
<keyword id="KW-0066">ATP synthesis</keyword>
<keyword id="KW-0138">CF(0)</keyword>
<keyword id="KW-0150">Chloroplast</keyword>
<keyword id="KW-0375">Hydrogen ion transport</keyword>
<keyword id="KW-0406">Ion transport</keyword>
<keyword id="KW-0472">Membrane</keyword>
<keyword id="KW-0934">Plastid</keyword>
<keyword id="KW-0793">Thylakoid</keyword>
<keyword id="KW-0812">Transmembrane</keyword>
<keyword id="KW-1133">Transmembrane helix</keyword>
<keyword id="KW-0813">Transport</keyword>
<proteinExistence type="inferred from homology"/>
<geneLocation type="chloroplast"/>
<feature type="chain" id="PRO_0000310412" description="ATP synthase subunit a, chloroplastic">
    <location>
        <begin position="1"/>
        <end position="245"/>
    </location>
</feature>
<feature type="transmembrane region" description="Helical" evidence="1">
    <location>
        <begin position="34"/>
        <end position="54"/>
    </location>
</feature>
<feature type="transmembrane region" description="Helical" evidence="1">
    <location>
        <begin position="93"/>
        <end position="113"/>
    </location>
</feature>
<feature type="transmembrane region" description="Helical" evidence="1">
    <location>
        <begin position="132"/>
        <end position="152"/>
    </location>
</feature>
<feature type="transmembrane region" description="Helical" evidence="1">
    <location>
        <begin position="197"/>
        <end position="217"/>
    </location>
</feature>
<feature type="transmembrane region" description="Helical" evidence="1">
    <location>
        <begin position="218"/>
        <end position="238"/>
    </location>
</feature>
<dbReference type="EMBL" id="DQ851108">
    <property type="protein sequence ID" value="ABG91388.1"/>
    <property type="molecule type" value="Genomic_DNA"/>
</dbReference>
<dbReference type="RefSeq" id="YP_778556.1">
    <property type="nucleotide sequence ID" value="NC_008408.1"/>
</dbReference>
<dbReference type="SMR" id="Q06J71"/>
<dbReference type="GeneID" id="4352973"/>
<dbReference type="GO" id="GO:0009535">
    <property type="term" value="C:chloroplast thylakoid membrane"/>
    <property type="evidence" value="ECO:0007669"/>
    <property type="project" value="UniProtKB-SubCell"/>
</dbReference>
<dbReference type="GO" id="GO:0005886">
    <property type="term" value="C:plasma membrane"/>
    <property type="evidence" value="ECO:0007669"/>
    <property type="project" value="UniProtKB-UniRule"/>
</dbReference>
<dbReference type="GO" id="GO:0045259">
    <property type="term" value="C:proton-transporting ATP synthase complex"/>
    <property type="evidence" value="ECO:0007669"/>
    <property type="project" value="UniProtKB-KW"/>
</dbReference>
<dbReference type="GO" id="GO:0046933">
    <property type="term" value="F:proton-transporting ATP synthase activity, rotational mechanism"/>
    <property type="evidence" value="ECO:0007669"/>
    <property type="project" value="UniProtKB-UniRule"/>
</dbReference>
<dbReference type="CDD" id="cd00310">
    <property type="entry name" value="ATP-synt_Fo_a_6"/>
    <property type="match status" value="1"/>
</dbReference>
<dbReference type="FunFam" id="1.20.120.220:FF:000001">
    <property type="entry name" value="ATP synthase subunit a, chloroplastic"/>
    <property type="match status" value="1"/>
</dbReference>
<dbReference type="Gene3D" id="1.20.120.220">
    <property type="entry name" value="ATP synthase, F0 complex, subunit A"/>
    <property type="match status" value="1"/>
</dbReference>
<dbReference type="HAMAP" id="MF_01393">
    <property type="entry name" value="ATP_synth_a_bact"/>
    <property type="match status" value="1"/>
</dbReference>
<dbReference type="InterPro" id="IPR045082">
    <property type="entry name" value="ATP_syn_F0_a_bact/chloroplast"/>
</dbReference>
<dbReference type="InterPro" id="IPR000568">
    <property type="entry name" value="ATP_synth_F0_asu"/>
</dbReference>
<dbReference type="InterPro" id="IPR023011">
    <property type="entry name" value="ATP_synth_F0_asu_AS"/>
</dbReference>
<dbReference type="InterPro" id="IPR035908">
    <property type="entry name" value="F0_ATP_A_sf"/>
</dbReference>
<dbReference type="NCBIfam" id="TIGR01131">
    <property type="entry name" value="ATP_synt_6_or_A"/>
    <property type="match status" value="1"/>
</dbReference>
<dbReference type="PANTHER" id="PTHR42823">
    <property type="entry name" value="ATP SYNTHASE SUBUNIT A, CHLOROPLASTIC"/>
    <property type="match status" value="1"/>
</dbReference>
<dbReference type="PANTHER" id="PTHR42823:SF3">
    <property type="entry name" value="ATP SYNTHASE SUBUNIT A, CHLOROPLASTIC"/>
    <property type="match status" value="1"/>
</dbReference>
<dbReference type="Pfam" id="PF00119">
    <property type="entry name" value="ATP-synt_A"/>
    <property type="match status" value="1"/>
</dbReference>
<dbReference type="PRINTS" id="PR00123">
    <property type="entry name" value="ATPASEA"/>
</dbReference>
<dbReference type="SUPFAM" id="SSF81336">
    <property type="entry name" value="F1F0 ATP synthase subunit A"/>
    <property type="match status" value="1"/>
</dbReference>
<dbReference type="PROSITE" id="PS00449">
    <property type="entry name" value="ATPASE_A"/>
    <property type="match status" value="1"/>
</dbReference>
<sequence>MNFFYYKDFYQLSEISVGQHYYWQISNFQVHGQTLMTSWFVISLIMIIAFLSNLNMKKIPLAKSFQNLAEFVTEFILDLARTQVGKEDYLNWVPFLGAVFLFIFVSNWGGALLPWKLLELPNGELAAPTNDINTTVALALLTSFSYFYAGISKKGISYFGRYVQPTPFLLPINVLEDFTKPLSLSFRLFGNLLADELVIAVLVSLVPLFVPVPLMLLGLFTSAIQALVFSTLAGAYIGESVEDHH</sequence>
<gene>
    <name evidence="1" type="primary">atpI</name>
</gene>
<protein>
    <recommendedName>
        <fullName evidence="1">ATP synthase subunit a, chloroplastic</fullName>
    </recommendedName>
    <alternativeName>
        <fullName evidence="1">ATP synthase F0 sector subunit a</fullName>
    </alternativeName>
    <alternativeName>
        <fullName evidence="1">F-ATPase subunit IV</fullName>
    </alternativeName>
</protein>
<accession>Q06J71</accession>
<organism>
    <name type="scientific">Bigelowiella natans</name>
    <name type="common">Pedinomonas minutissima</name>
    <name type="synonym">Chlorarachnion sp. (strain CCMP621)</name>
    <dbReference type="NCBI Taxonomy" id="227086"/>
    <lineage>
        <taxon>Eukaryota</taxon>
        <taxon>Sar</taxon>
        <taxon>Rhizaria</taxon>
        <taxon>Cercozoa</taxon>
        <taxon>Chlorarachniophyceae</taxon>
        <taxon>Bigelowiella</taxon>
    </lineage>
</organism>
<comment type="function">
    <text evidence="1">Key component of the proton channel; it plays a direct role in the translocation of protons across the membrane.</text>
</comment>
<comment type="subunit">
    <text evidence="1">F-type ATPases have 2 components, CF(1) - the catalytic core - and CF(0) - the membrane proton channel. CF(1) has five subunits: alpha(3), beta(3), gamma(1), delta(1), epsilon(1). CF(0) has four main subunits: a, b, b' and c.</text>
</comment>
<comment type="subcellular location">
    <subcellularLocation>
        <location evidence="1">Plastid</location>
        <location evidence="1">Chloroplast thylakoid membrane</location>
        <topology evidence="1">Multi-pass membrane protein</topology>
    </subcellularLocation>
</comment>
<comment type="similarity">
    <text evidence="1">Belongs to the ATPase A chain family.</text>
</comment>
<evidence type="ECO:0000255" key="1">
    <source>
        <dbReference type="HAMAP-Rule" id="MF_01393"/>
    </source>
</evidence>
<reference key="1">
    <citation type="journal article" date="2007" name="Mol. Biol. Evol.">
        <title>The complete chloroplast genome of the chlorarachniophyte Bigelowiella natans: evidence for independent origins of chlorarachniophyte and euglenid secondary endosymbionts.</title>
        <authorList>
            <person name="Rogers M.B."/>
            <person name="Gilson P.R."/>
            <person name="Su V."/>
            <person name="McFadden G.I."/>
            <person name="Keeling P.J."/>
        </authorList>
    </citation>
    <scope>NUCLEOTIDE SEQUENCE [LARGE SCALE GENOMIC DNA]</scope>
</reference>